<organism>
    <name type="scientific">Cyanidium caldarium</name>
    <name type="common">Red alga</name>
    <dbReference type="NCBI Taxonomy" id="2771"/>
    <lineage>
        <taxon>Eukaryota</taxon>
        <taxon>Rhodophyta</taxon>
        <taxon>Bangiophyceae</taxon>
        <taxon>Cyanidiales</taxon>
        <taxon>Cyanidiaceae</taxon>
        <taxon>Cyanidium</taxon>
    </lineage>
</organism>
<sequence>MTVTLERRESTSLWERFCSWITSTENRLYIGWFGVLMIPCLLTATTVFIIAFIAAPPVDIDGIREPVSGSLLYGNNIITGAVVPTSNAIGLHLYPIWEAASLDEWLYNGGPYQLVVLHFLLGVAAYMGREWELSYRLGMRPWICVAFSAPVAAATAVFLIYPIGQGSFSDGMPLGISGTFNFMLVFQAEHNILMHPFHMAGVAGVFGGALFSAMHGSLVTSSLIRETTENESPNYGYKLGQEEETYNIVAAHGYFGRLIFQYASFNNSRALHFFLGLWPVVGIWLTSIGISTMAFNLNGLNFNQSIVDSQGRVINTWADIINRANLGIEVMHERNAHNFPLDLADNSLLPVASSSPSINS</sequence>
<proteinExistence type="evidence at protein level"/>
<dbReference type="EC" id="1.10.3.9" evidence="1"/>
<dbReference type="EMBL" id="AF022186">
    <property type="protein sequence ID" value="AAB82694.1"/>
    <property type="molecule type" value="Genomic_DNA"/>
</dbReference>
<dbReference type="PIR" id="T11963">
    <property type="entry name" value="T11963"/>
</dbReference>
<dbReference type="RefSeq" id="NP_045067.1">
    <property type="nucleotide sequence ID" value="NC_001840.1"/>
</dbReference>
<dbReference type="PDB" id="4YUU">
    <property type="method" value="X-ray"/>
    <property type="resolution" value="2.77 A"/>
    <property type="chains" value="A1/A2/a1/a2=1-344"/>
</dbReference>
<dbReference type="PDBsum" id="4YUU"/>
<dbReference type="SMR" id="O19895"/>
<dbReference type="GeneID" id="800253"/>
<dbReference type="GO" id="GO:0009535">
    <property type="term" value="C:chloroplast thylakoid membrane"/>
    <property type="evidence" value="ECO:0007669"/>
    <property type="project" value="UniProtKB-SubCell"/>
</dbReference>
<dbReference type="GO" id="GO:0009523">
    <property type="term" value="C:photosystem II"/>
    <property type="evidence" value="ECO:0007669"/>
    <property type="project" value="UniProtKB-KW"/>
</dbReference>
<dbReference type="GO" id="GO:0016168">
    <property type="term" value="F:chlorophyll binding"/>
    <property type="evidence" value="ECO:0007669"/>
    <property type="project" value="UniProtKB-UniRule"/>
</dbReference>
<dbReference type="GO" id="GO:0045156">
    <property type="term" value="F:electron transporter, transferring electrons within the cyclic electron transport pathway of photosynthesis activity"/>
    <property type="evidence" value="ECO:0007669"/>
    <property type="project" value="InterPro"/>
</dbReference>
<dbReference type="GO" id="GO:0005506">
    <property type="term" value="F:iron ion binding"/>
    <property type="evidence" value="ECO:0007669"/>
    <property type="project" value="UniProtKB-UniRule"/>
</dbReference>
<dbReference type="GO" id="GO:0016682">
    <property type="term" value="F:oxidoreductase activity, acting on diphenols and related substances as donors, oxygen as acceptor"/>
    <property type="evidence" value="ECO:0007669"/>
    <property type="project" value="UniProtKB-UniRule"/>
</dbReference>
<dbReference type="GO" id="GO:0009772">
    <property type="term" value="P:photosynthetic electron transport in photosystem II"/>
    <property type="evidence" value="ECO:0007669"/>
    <property type="project" value="InterPro"/>
</dbReference>
<dbReference type="GO" id="GO:0009635">
    <property type="term" value="P:response to herbicide"/>
    <property type="evidence" value="ECO:0007669"/>
    <property type="project" value="UniProtKB-KW"/>
</dbReference>
<dbReference type="CDD" id="cd09289">
    <property type="entry name" value="Photosystem-II_D1"/>
    <property type="match status" value="1"/>
</dbReference>
<dbReference type="FunFam" id="1.20.85.10:FF:000002">
    <property type="entry name" value="Photosystem II protein D1"/>
    <property type="match status" value="1"/>
</dbReference>
<dbReference type="Gene3D" id="1.20.85.10">
    <property type="entry name" value="Photosystem II protein D1-like"/>
    <property type="match status" value="1"/>
</dbReference>
<dbReference type="HAMAP" id="MF_01379">
    <property type="entry name" value="PSII_PsbA_D1"/>
    <property type="match status" value="1"/>
</dbReference>
<dbReference type="InterPro" id="IPR055266">
    <property type="entry name" value="D1/D2"/>
</dbReference>
<dbReference type="InterPro" id="IPR036854">
    <property type="entry name" value="Photo_II_D1/D2_sf"/>
</dbReference>
<dbReference type="InterPro" id="IPR000484">
    <property type="entry name" value="Photo_RC_L/M"/>
</dbReference>
<dbReference type="InterPro" id="IPR055265">
    <property type="entry name" value="Photo_RC_L/M_CS"/>
</dbReference>
<dbReference type="InterPro" id="IPR005867">
    <property type="entry name" value="PSII_D1"/>
</dbReference>
<dbReference type="NCBIfam" id="TIGR01151">
    <property type="entry name" value="psbA"/>
    <property type="match status" value="1"/>
</dbReference>
<dbReference type="PANTHER" id="PTHR33149:SF12">
    <property type="entry name" value="PHOTOSYSTEM II D2 PROTEIN"/>
    <property type="match status" value="1"/>
</dbReference>
<dbReference type="PANTHER" id="PTHR33149">
    <property type="entry name" value="PHOTOSYSTEM II PROTEIN D1"/>
    <property type="match status" value="1"/>
</dbReference>
<dbReference type="Pfam" id="PF00124">
    <property type="entry name" value="Photo_RC"/>
    <property type="match status" value="1"/>
</dbReference>
<dbReference type="PRINTS" id="PR00256">
    <property type="entry name" value="REACTNCENTRE"/>
</dbReference>
<dbReference type="SUPFAM" id="SSF81483">
    <property type="entry name" value="Bacterial photosystem II reaction centre, L and M subunits"/>
    <property type="match status" value="1"/>
</dbReference>
<dbReference type="PROSITE" id="PS00244">
    <property type="entry name" value="REACTION_CENTER"/>
    <property type="match status" value="1"/>
</dbReference>
<gene>
    <name evidence="1" type="primary">psbA</name>
</gene>
<accession>O19895</accession>
<feature type="chain" id="PRO_0000090436" description="Photosystem II protein D1" evidence="2">
    <location>
        <begin position="1"/>
        <end position="344"/>
    </location>
</feature>
<feature type="propeptide" id="PRO_0000316508" evidence="2">
    <location>
        <begin position="345"/>
        <end position="360"/>
    </location>
</feature>
<feature type="transmembrane region" description="Helical" evidence="1">
    <location>
        <begin position="29"/>
        <end position="46"/>
    </location>
</feature>
<feature type="transmembrane region" description="Helical" evidence="1">
    <location>
        <begin position="118"/>
        <end position="133"/>
    </location>
</feature>
<feature type="transmembrane region" description="Helical" evidence="1">
    <location>
        <begin position="142"/>
        <end position="156"/>
    </location>
</feature>
<feature type="transmembrane region" description="Helical" evidence="1">
    <location>
        <begin position="197"/>
        <end position="218"/>
    </location>
</feature>
<feature type="transmembrane region" description="Helical" evidence="1">
    <location>
        <begin position="274"/>
        <end position="288"/>
    </location>
</feature>
<feature type="binding site" description="axial binding residue" evidence="1">
    <location>
        <position position="118"/>
    </location>
    <ligand>
        <name>chlorophyll a</name>
        <dbReference type="ChEBI" id="CHEBI:58416"/>
        <label>ChlzD1</label>
    </ligand>
    <ligandPart>
        <name>Mg</name>
        <dbReference type="ChEBI" id="CHEBI:25107"/>
    </ligandPart>
</feature>
<feature type="binding site" evidence="1">
    <location>
        <position position="126"/>
    </location>
    <ligand>
        <name>pheophytin a</name>
        <dbReference type="ChEBI" id="CHEBI:136840"/>
        <label>D1</label>
    </ligand>
</feature>
<feature type="binding site" evidence="1">
    <location>
        <position position="170"/>
    </location>
    <ligand>
        <name>[CaMn4O5] cluster</name>
        <dbReference type="ChEBI" id="CHEBI:189552"/>
    </ligand>
</feature>
<feature type="binding site" evidence="1">
    <location>
        <position position="189"/>
    </location>
    <ligand>
        <name>[CaMn4O5] cluster</name>
        <dbReference type="ChEBI" id="CHEBI:189552"/>
    </ligand>
</feature>
<feature type="binding site" description="axial binding residue" evidence="1">
    <location>
        <position position="198"/>
    </location>
    <ligand>
        <name>chlorophyll a</name>
        <dbReference type="ChEBI" id="CHEBI:58416"/>
        <label>PD1</label>
    </ligand>
    <ligandPart>
        <name>Mg</name>
        <dbReference type="ChEBI" id="CHEBI:25107"/>
    </ligandPart>
</feature>
<feature type="binding site" evidence="1">
    <location>
        <position position="215"/>
    </location>
    <ligand>
        <name>a quinone</name>
        <dbReference type="ChEBI" id="CHEBI:132124"/>
        <label>B</label>
    </ligand>
</feature>
<feature type="binding site" evidence="1">
    <location>
        <position position="215"/>
    </location>
    <ligand>
        <name>Fe cation</name>
        <dbReference type="ChEBI" id="CHEBI:24875"/>
        <note>ligand shared with heterodimeric partner</note>
    </ligand>
</feature>
<feature type="binding site" evidence="1">
    <location>
        <begin position="264"/>
        <end position="265"/>
    </location>
    <ligand>
        <name>a quinone</name>
        <dbReference type="ChEBI" id="CHEBI:132124"/>
        <label>B</label>
    </ligand>
</feature>
<feature type="binding site" evidence="1">
    <location>
        <position position="272"/>
    </location>
    <ligand>
        <name>Fe cation</name>
        <dbReference type="ChEBI" id="CHEBI:24875"/>
        <note>ligand shared with heterodimeric partner</note>
    </ligand>
</feature>
<feature type="binding site" evidence="1">
    <location>
        <position position="332"/>
    </location>
    <ligand>
        <name>[CaMn4O5] cluster</name>
        <dbReference type="ChEBI" id="CHEBI:189552"/>
    </ligand>
</feature>
<feature type="binding site" evidence="1">
    <location>
        <position position="333"/>
    </location>
    <ligand>
        <name>[CaMn4O5] cluster</name>
        <dbReference type="ChEBI" id="CHEBI:189552"/>
    </ligand>
</feature>
<feature type="binding site" evidence="1">
    <location>
        <position position="342"/>
    </location>
    <ligand>
        <name>[CaMn4O5] cluster</name>
        <dbReference type="ChEBI" id="CHEBI:189552"/>
    </ligand>
</feature>
<feature type="binding site" evidence="1">
    <location>
        <position position="344"/>
    </location>
    <ligand>
        <name>[CaMn4O5] cluster</name>
        <dbReference type="ChEBI" id="CHEBI:189552"/>
    </ligand>
</feature>
<feature type="site" description="Tyrosine radical intermediate" evidence="1">
    <location>
        <position position="161"/>
    </location>
</feature>
<feature type="site" description="Stabilizes free radical intermediate" evidence="1">
    <location>
        <position position="190"/>
    </location>
</feature>
<name>PSBA_CYACA</name>
<reference key="1">
    <citation type="journal article" date="2000" name="J. Mol. Evol.">
        <title>The structure and gene repertoire of an ancient red algal plastid genome.</title>
        <authorList>
            <person name="Gloeckner G."/>
            <person name="Rosenthal A."/>
            <person name="Valentin K.-U."/>
        </authorList>
    </citation>
    <scope>NUCLEOTIDE SEQUENCE [LARGE SCALE GENOMIC DNA]</scope>
    <source>
        <strain>RK-1</strain>
    </source>
</reference>
<evidence type="ECO:0000255" key="1">
    <source>
        <dbReference type="HAMAP-Rule" id="MF_01379"/>
    </source>
</evidence>
<evidence type="ECO:0000305" key="2"/>
<protein>
    <recommendedName>
        <fullName evidence="1">Photosystem II protein D1</fullName>
        <shortName evidence="1">PSII D1 protein</shortName>
        <ecNumber evidence="1">1.10.3.9</ecNumber>
    </recommendedName>
    <alternativeName>
        <fullName evidence="1">Photosystem II Q(B) protein</fullName>
    </alternativeName>
</protein>
<geneLocation type="chloroplast"/>
<comment type="function">
    <text evidence="1">Photosystem II (PSII) is a light-driven water:plastoquinone oxidoreductase that uses light energy to abstract electrons from H(2)O, generating O(2) and a proton gradient subsequently used for ATP formation. It consists of a core antenna complex that captures photons, and an electron transfer chain that converts photonic excitation into a charge separation. The D1/D2 (PsbA/PsbD) reaction center heterodimer binds P680, the primary electron donor of PSII as well as several subsequent electron acceptors.</text>
</comment>
<comment type="catalytic activity">
    <reaction evidence="1">
        <text>2 a plastoquinone + 4 hnu + 2 H2O = 2 a plastoquinol + O2</text>
        <dbReference type="Rhea" id="RHEA:36359"/>
        <dbReference type="Rhea" id="RHEA-COMP:9561"/>
        <dbReference type="Rhea" id="RHEA-COMP:9562"/>
        <dbReference type="ChEBI" id="CHEBI:15377"/>
        <dbReference type="ChEBI" id="CHEBI:15379"/>
        <dbReference type="ChEBI" id="CHEBI:17757"/>
        <dbReference type="ChEBI" id="CHEBI:30212"/>
        <dbReference type="ChEBI" id="CHEBI:62192"/>
        <dbReference type="EC" id="1.10.3.9"/>
    </reaction>
</comment>
<comment type="cofactor">
    <text evidence="1">The D1/D2 heterodimer binds P680, chlorophylls that are the primary electron donor of PSII, and subsequent electron acceptors. It shares a non-heme iron and each subunit binds pheophytin, quinone, additional chlorophylls, carotenoids and lipids. D1 provides most of the ligands for the Mn4-Ca-O5 cluster of the oxygen-evolving complex (OEC). There is also a Cl(-1) ion associated with D1 and D2, which is required for oxygen evolution. The PSII complex binds additional chlorophylls, carotenoids and specific lipids.</text>
</comment>
<comment type="subunit">
    <text evidence="2">PSII is composed of 1 copy each of membrane proteins PsbA, PsbB, PsbC, PsbD, PsbE, PsbF, PsbH, PsbI, PsbJ, PsbK, PsbL, PsbM, PsbT, PsbY, PsbZ, Psb30/Ycf12, at least 3 peripheral proteins of the oxygen-evolving complex and a large number of cofactors. It forms dimeric complexes.</text>
</comment>
<comment type="subcellular location">
    <subcellularLocation>
        <location evidence="1">Plastid</location>
        <location evidence="1">Chloroplast thylakoid membrane</location>
        <topology evidence="1">Multi-pass membrane protein</topology>
    </subcellularLocation>
</comment>
<comment type="PTM">
    <text evidence="1">Tyr-161 forms a radical intermediate that is referred to as redox-active TyrZ, YZ or Y-Z.</text>
</comment>
<comment type="miscellaneous">
    <text evidence="1">2 of the reaction center chlorophylls (ChlD1 and ChlD2) are entirely coordinated by water.</text>
</comment>
<comment type="miscellaneous">
    <text evidence="1">Herbicides such as atrazine, BNT, diuron or ioxynil bind in the Q(B) binding site and block subsequent electron transfer.</text>
</comment>
<comment type="similarity">
    <text evidence="1">Belongs to the reaction center PufL/M/PsbA/D family.</text>
</comment>
<keyword id="KW-0002">3D-structure</keyword>
<keyword id="KW-0106">Calcium</keyword>
<keyword id="KW-0148">Chlorophyll</keyword>
<keyword id="KW-0150">Chloroplast</keyword>
<keyword id="KW-0157">Chromophore</keyword>
<keyword id="KW-0249">Electron transport</keyword>
<keyword id="KW-0359">Herbicide resistance</keyword>
<keyword id="KW-0408">Iron</keyword>
<keyword id="KW-0460">Magnesium</keyword>
<keyword id="KW-0464">Manganese</keyword>
<keyword id="KW-0472">Membrane</keyword>
<keyword id="KW-0479">Metal-binding</keyword>
<keyword id="KW-0560">Oxidoreductase</keyword>
<keyword id="KW-0602">Photosynthesis</keyword>
<keyword id="KW-0604">Photosystem II</keyword>
<keyword id="KW-0934">Plastid</keyword>
<keyword id="KW-0793">Thylakoid</keyword>
<keyword id="KW-0812">Transmembrane</keyword>
<keyword id="KW-1133">Transmembrane helix</keyword>
<keyword id="KW-0813">Transport</keyword>